<dbReference type="EMBL" id="CP001096">
    <property type="protein sequence ID" value="ACE98601.1"/>
    <property type="molecule type" value="Genomic_DNA"/>
</dbReference>
<dbReference type="RefSeq" id="WP_011155609.1">
    <property type="nucleotide sequence ID" value="NC_011004.1"/>
</dbReference>
<dbReference type="SMR" id="B3Q5X2"/>
<dbReference type="GeneID" id="66891037"/>
<dbReference type="KEGG" id="rpt:Rpal_0039"/>
<dbReference type="HOGENOM" id="CLU_123265_0_1_5"/>
<dbReference type="OrthoDB" id="9808966at2"/>
<dbReference type="Proteomes" id="UP000001725">
    <property type="component" value="Chromosome"/>
</dbReference>
<dbReference type="GO" id="GO:1990904">
    <property type="term" value="C:ribonucleoprotein complex"/>
    <property type="evidence" value="ECO:0007669"/>
    <property type="project" value="UniProtKB-KW"/>
</dbReference>
<dbReference type="GO" id="GO:0005840">
    <property type="term" value="C:ribosome"/>
    <property type="evidence" value="ECO:0007669"/>
    <property type="project" value="UniProtKB-KW"/>
</dbReference>
<dbReference type="GO" id="GO:0019843">
    <property type="term" value="F:rRNA binding"/>
    <property type="evidence" value="ECO:0007669"/>
    <property type="project" value="UniProtKB-UniRule"/>
</dbReference>
<dbReference type="GO" id="GO:0003735">
    <property type="term" value="F:structural constituent of ribosome"/>
    <property type="evidence" value="ECO:0007669"/>
    <property type="project" value="InterPro"/>
</dbReference>
<dbReference type="GO" id="GO:0000027">
    <property type="term" value="P:ribosomal large subunit assembly"/>
    <property type="evidence" value="ECO:0007669"/>
    <property type="project" value="UniProtKB-UniRule"/>
</dbReference>
<dbReference type="GO" id="GO:0006412">
    <property type="term" value="P:translation"/>
    <property type="evidence" value="ECO:0007669"/>
    <property type="project" value="InterPro"/>
</dbReference>
<dbReference type="CDD" id="cd07026">
    <property type="entry name" value="Ribosomal_L20"/>
    <property type="match status" value="1"/>
</dbReference>
<dbReference type="FunFam" id="1.10.1900.20:FF:000001">
    <property type="entry name" value="50S ribosomal protein L20"/>
    <property type="match status" value="1"/>
</dbReference>
<dbReference type="Gene3D" id="6.10.160.10">
    <property type="match status" value="1"/>
</dbReference>
<dbReference type="Gene3D" id="1.10.1900.20">
    <property type="entry name" value="Ribosomal protein L20"/>
    <property type="match status" value="1"/>
</dbReference>
<dbReference type="HAMAP" id="MF_00382">
    <property type="entry name" value="Ribosomal_bL20"/>
    <property type="match status" value="1"/>
</dbReference>
<dbReference type="InterPro" id="IPR005813">
    <property type="entry name" value="Ribosomal_bL20"/>
</dbReference>
<dbReference type="InterPro" id="IPR049946">
    <property type="entry name" value="RIBOSOMAL_L20_CS"/>
</dbReference>
<dbReference type="InterPro" id="IPR035566">
    <property type="entry name" value="Ribosomal_protein_bL20_C"/>
</dbReference>
<dbReference type="NCBIfam" id="TIGR01032">
    <property type="entry name" value="rplT_bact"/>
    <property type="match status" value="1"/>
</dbReference>
<dbReference type="PANTHER" id="PTHR10986">
    <property type="entry name" value="39S RIBOSOMAL PROTEIN L20"/>
    <property type="match status" value="1"/>
</dbReference>
<dbReference type="Pfam" id="PF00453">
    <property type="entry name" value="Ribosomal_L20"/>
    <property type="match status" value="1"/>
</dbReference>
<dbReference type="PRINTS" id="PR00062">
    <property type="entry name" value="RIBOSOMALL20"/>
</dbReference>
<dbReference type="SUPFAM" id="SSF74731">
    <property type="entry name" value="Ribosomal protein L20"/>
    <property type="match status" value="1"/>
</dbReference>
<dbReference type="PROSITE" id="PS00937">
    <property type="entry name" value="RIBOSOMAL_L20"/>
    <property type="match status" value="1"/>
</dbReference>
<protein>
    <recommendedName>
        <fullName evidence="1">Large ribosomal subunit protein bL20</fullName>
    </recommendedName>
    <alternativeName>
        <fullName evidence="2">50S ribosomal protein L20</fullName>
    </alternativeName>
</protein>
<feature type="chain" id="PRO_1000122362" description="Large ribosomal subunit protein bL20">
    <location>
        <begin position="1"/>
        <end position="119"/>
    </location>
</feature>
<evidence type="ECO:0000255" key="1">
    <source>
        <dbReference type="HAMAP-Rule" id="MF_00382"/>
    </source>
</evidence>
<evidence type="ECO:0000305" key="2"/>
<comment type="function">
    <text evidence="1">Binds directly to 23S ribosomal RNA and is necessary for the in vitro assembly process of the 50S ribosomal subunit. It is not involved in the protein synthesizing functions of that subunit.</text>
</comment>
<comment type="similarity">
    <text evidence="1">Belongs to the bacterial ribosomal protein bL20 family.</text>
</comment>
<gene>
    <name evidence="1" type="primary">rplT</name>
    <name type="ordered locus">Rpal_0039</name>
</gene>
<keyword id="KW-0687">Ribonucleoprotein</keyword>
<keyword id="KW-0689">Ribosomal protein</keyword>
<keyword id="KW-0694">RNA-binding</keyword>
<keyword id="KW-0699">rRNA-binding</keyword>
<reference key="1">
    <citation type="submission" date="2008-05" db="EMBL/GenBank/DDBJ databases">
        <title>Complete sequence of Rhodopseudomonas palustris TIE-1.</title>
        <authorList>
            <consortium name="US DOE Joint Genome Institute"/>
            <person name="Lucas S."/>
            <person name="Copeland A."/>
            <person name="Lapidus A."/>
            <person name="Glavina del Rio T."/>
            <person name="Dalin E."/>
            <person name="Tice H."/>
            <person name="Pitluck S."/>
            <person name="Chain P."/>
            <person name="Malfatti S."/>
            <person name="Shin M."/>
            <person name="Vergez L."/>
            <person name="Lang D."/>
            <person name="Schmutz J."/>
            <person name="Larimer F."/>
            <person name="Land M."/>
            <person name="Hauser L."/>
            <person name="Kyrpides N."/>
            <person name="Mikhailova N."/>
            <person name="Emerson D."/>
            <person name="Newman D.K."/>
            <person name="Roden E."/>
            <person name="Richardson P."/>
        </authorList>
    </citation>
    <scope>NUCLEOTIDE SEQUENCE [LARGE SCALE GENOMIC DNA]</scope>
    <source>
        <strain>TIE-1</strain>
    </source>
</reference>
<sequence>MARVKRGVTAHAKHKKVYKLAKGYRGRRKNTIRTAKAAVDKAGQYAFRDRKRKKRTFRALWIQRLNAAVRPFGMTYSVFINGLSKSGIVVDRKVLSDLAINEPAAFQAIAEKAKAALAA</sequence>
<accession>B3Q5X2</accession>
<proteinExistence type="inferred from homology"/>
<organism>
    <name type="scientific">Rhodopseudomonas palustris (strain TIE-1)</name>
    <dbReference type="NCBI Taxonomy" id="395960"/>
    <lineage>
        <taxon>Bacteria</taxon>
        <taxon>Pseudomonadati</taxon>
        <taxon>Pseudomonadota</taxon>
        <taxon>Alphaproteobacteria</taxon>
        <taxon>Hyphomicrobiales</taxon>
        <taxon>Nitrobacteraceae</taxon>
        <taxon>Rhodopseudomonas</taxon>
    </lineage>
</organism>
<name>RL20_RHOPT</name>